<protein>
    <recommendedName>
        <fullName>Cysteine-rich motor neuron 1 protein</fullName>
        <shortName>CRIM-1</shortName>
    </recommendedName>
    <alternativeName>
        <fullName>Cysteine-rich repeat-containing protein S52</fullName>
    </alternativeName>
    <component>
        <recommendedName>
            <fullName>Processed cysteine-rich motor neuron 1 protein</fullName>
        </recommendedName>
    </component>
</protein>
<sequence length="1036" mass="113738">MYLVAGDRGLAGCGHLLVSLLGLLLLLARSGTRALVCLPCDESKCEEPRNCPGSIVQGVCGCCYTCASQRNESCGGTFGIYGTCDRGLRCVIRPPLNGDSLTEYEAGVCEDENWTDDQLLGFKPCNENLIAGCNIINGKCECNTIRTCSNPFEFPSQDMCLSALKRIEEEKPDCSKARCEVQFSPRCPEDSVLIEGYAPPGECCPLPSRCVCNPAGCLRKVCQPGNLNILVSKASGKPGECCDLYECKPVFGVDCRTVECPPVQQTACPPDSYETQVRLTADGCCTLPTRCECLSGLCGFPVCEVGSTPRIVSRGDGTPGKCCDVFECVNDTKPACVFNNVEYYDGDMFRMDNCRFCRCQGGVAICFTAQCGEINCERYYVPEGECCPVCEDPVYPFNNPAGCYANGLILAHGDRWREDDCTFCQCVNGERHCVATVCGQTCTNPVKVPGECCPVCEEPTIITVDPPACGELSNCTLTGKDCINGFKRDHNGCRTCQCINTEELCSERKQGCTLNCPFGFLTDAQNCEICECRPRPKKCRPIICDKYCPLGLLKNKHGCDICRCKKCPELSCSKICPLGFQQDSHGCLICKCREASASAGPPILSGTCLTVDGHHHKNEESWHDGCRECYCLNGREMCALITCPVPACGNPTIHPGQCCPSCADDFVVQKPELSTPSICHAPGGEYFVEGETWNIDSCTQCTCHSGRVLCETEVCPPLLCQNPSRTQDSCCPQCTDQPFRPSLSRNNSVPNYCKNDEGDIFLAAESWKPDVCTSCICIDSVISCFSESCPSVSCERPVLRKGQCCPYCIEDTIPKKVVCHFSGKAYADEERWDLDSCTHCYCLQGQTLCSTVSCPPLPCVEPINVEGSCCPMCPEMYVPEPTNIPIEKTNHRGEVDLEVPLWPTPSENDIVHLPRDMGHLQVDYRDNRLHPSEDSSLDSIASVVVPIIICLSIIIAFLFINQKKQWIPLLCWYRTPTKPSSLNNQLVSVDCKKGTRVQVDSSQRMLRIAEPDARFSGFYSMQKQNHLQADNFYQTV</sequence>
<organism>
    <name type="scientific">Homo sapiens</name>
    <name type="common">Human</name>
    <dbReference type="NCBI Taxonomy" id="9606"/>
    <lineage>
        <taxon>Eukaryota</taxon>
        <taxon>Metazoa</taxon>
        <taxon>Chordata</taxon>
        <taxon>Craniata</taxon>
        <taxon>Vertebrata</taxon>
        <taxon>Euteleostomi</taxon>
        <taxon>Mammalia</taxon>
        <taxon>Eutheria</taxon>
        <taxon>Euarchontoglires</taxon>
        <taxon>Primates</taxon>
        <taxon>Haplorrhini</taxon>
        <taxon>Catarrhini</taxon>
        <taxon>Hominidae</taxon>
        <taxon>Homo</taxon>
    </lineage>
</organism>
<gene>
    <name type="primary">CRIM1</name>
    <name type="synonym">S52</name>
    <name type="ORF">UNQ1886/PRO4330</name>
</gene>
<comment type="function">
    <text evidence="6 7">May play a role in CNS development by interacting with growth factors implicated in motor neuron differentiation and survival. May play a role in capillary formation and maintenance during angiogenesis. Modulates BMP activity by affecting its processing and delivery to the cell surface.</text>
</comment>
<comment type="subunit">
    <text evidence="7">Interacts with BMP4 and BMP7.</text>
</comment>
<comment type="subcellular location">
    <molecule>Processed cysteine-rich motor neuron 1 protein</molecule>
    <subcellularLocation>
        <location>Secreted</location>
    </subcellularLocation>
</comment>
<comment type="subcellular location">
    <subcellularLocation>
        <location evidence="7">Cell membrane</location>
        <topology evidence="7">Single-pass type I membrane protein</topology>
    </subcellularLocation>
</comment>
<comment type="tissue specificity">
    <text evidence="5 6">Expressed in pancreas, kidney, skeletal muscle, lung, placenta, brain, heart, spleen, liver and small intestine. Expressed in blood vessels (at protein level).</text>
</comment>
<comment type="PTM">
    <text evidence="6 7">N-glycosylated.</text>
</comment>
<comment type="sequence caution" evidence="9">
    <conflict type="erroneous initiation">
        <sequence resource="EMBL-CDS" id="BAD92376"/>
    </conflict>
</comment>
<dbReference type="EMBL" id="AF167706">
    <property type="protein sequence ID" value="AAF34409.1"/>
    <property type="molecule type" value="mRNA"/>
</dbReference>
<dbReference type="EMBL" id="AF168681">
    <property type="protein sequence ID" value="AAG37011.1"/>
    <property type="molecule type" value="Genomic_DNA"/>
</dbReference>
<dbReference type="EMBL" id="AB209139">
    <property type="protein sequence ID" value="BAD92376.1"/>
    <property type="status" value="ALT_INIT"/>
    <property type="molecule type" value="mRNA"/>
</dbReference>
<dbReference type="EMBL" id="AY358371">
    <property type="protein sequence ID" value="AAQ88737.1"/>
    <property type="molecule type" value="mRNA"/>
</dbReference>
<dbReference type="EMBL" id="BC111989">
    <property type="protein sequence ID" value="AAI11990.1"/>
    <property type="molecule type" value="mRNA"/>
</dbReference>
<dbReference type="EMBL" id="BC113371">
    <property type="protein sequence ID" value="AAI13372.1"/>
    <property type="molecule type" value="mRNA"/>
</dbReference>
<dbReference type="CCDS" id="CCDS1783.1"/>
<dbReference type="RefSeq" id="NP_057525.1">
    <property type="nucleotide sequence ID" value="NM_016441.3"/>
</dbReference>
<dbReference type="SMR" id="Q9NZV1"/>
<dbReference type="BioGRID" id="119395">
    <property type="interactions" value="35"/>
</dbReference>
<dbReference type="DIP" id="DIP-58932N"/>
<dbReference type="FunCoup" id="Q9NZV1">
    <property type="interactions" value="801"/>
</dbReference>
<dbReference type="IntAct" id="Q9NZV1">
    <property type="interactions" value="15"/>
</dbReference>
<dbReference type="MINT" id="Q9NZV1"/>
<dbReference type="STRING" id="9606.ENSP00000280527"/>
<dbReference type="TCDB" id="9.B.87.1.36">
    <property type="family name" value="the selenoprotein p receptor (selp-receptor) family"/>
</dbReference>
<dbReference type="GlyCosmos" id="Q9NZV1">
    <property type="glycosylation" value="7 sites, 2 glycans"/>
</dbReference>
<dbReference type="GlyGen" id="Q9NZV1">
    <property type="glycosylation" value="16 sites, 1 N-linked glycan (2 sites), 4 O-linked glycans (10 sites)"/>
</dbReference>
<dbReference type="iPTMnet" id="Q9NZV1"/>
<dbReference type="PhosphoSitePlus" id="Q9NZV1"/>
<dbReference type="SwissPalm" id="Q9NZV1"/>
<dbReference type="BioMuta" id="CRIM1"/>
<dbReference type="DMDM" id="67460590"/>
<dbReference type="jPOST" id="Q9NZV1"/>
<dbReference type="MassIVE" id="Q9NZV1"/>
<dbReference type="PaxDb" id="9606-ENSP00000280527"/>
<dbReference type="PeptideAtlas" id="Q9NZV1"/>
<dbReference type="ProteomicsDB" id="83516"/>
<dbReference type="Pumba" id="Q9NZV1"/>
<dbReference type="Antibodypedia" id="617">
    <property type="antibodies" value="168 antibodies from 28 providers"/>
</dbReference>
<dbReference type="DNASU" id="51232"/>
<dbReference type="Ensembl" id="ENST00000280527.7">
    <property type="protein sequence ID" value="ENSP00000280527.2"/>
    <property type="gene ID" value="ENSG00000150938.10"/>
</dbReference>
<dbReference type="GeneID" id="51232"/>
<dbReference type="KEGG" id="hsa:51232"/>
<dbReference type="MANE-Select" id="ENST00000280527.7">
    <property type="protein sequence ID" value="ENSP00000280527.2"/>
    <property type="RefSeq nucleotide sequence ID" value="NM_016441.3"/>
    <property type="RefSeq protein sequence ID" value="NP_057525.1"/>
</dbReference>
<dbReference type="UCSC" id="uc002rpd.4">
    <property type="organism name" value="human"/>
</dbReference>
<dbReference type="AGR" id="HGNC:2359"/>
<dbReference type="CTD" id="51232"/>
<dbReference type="DisGeNET" id="51232"/>
<dbReference type="GeneCards" id="CRIM1"/>
<dbReference type="HGNC" id="HGNC:2359">
    <property type="gene designation" value="CRIM1"/>
</dbReference>
<dbReference type="HPA" id="ENSG00000150938">
    <property type="expression patterns" value="Tissue enhanced (placenta)"/>
</dbReference>
<dbReference type="MalaCards" id="CRIM1"/>
<dbReference type="MIM" id="606189">
    <property type="type" value="gene"/>
</dbReference>
<dbReference type="neXtProt" id="NX_Q9NZV1"/>
<dbReference type="OpenTargets" id="ENSG00000150938"/>
<dbReference type="Orphanet" id="468672">
    <property type="disease" value="Colobomatous macrophthalmia-microcornea syndrome"/>
</dbReference>
<dbReference type="PharmGKB" id="PA26877"/>
<dbReference type="VEuPathDB" id="HostDB:ENSG00000150938"/>
<dbReference type="eggNOG" id="KOG1216">
    <property type="taxonomic scope" value="Eukaryota"/>
</dbReference>
<dbReference type="GeneTree" id="ENSGT00940000160910"/>
<dbReference type="HOGENOM" id="CLU_008434_0_0_1"/>
<dbReference type="InParanoid" id="Q9NZV1"/>
<dbReference type="OMA" id="FNNVEYH"/>
<dbReference type="OrthoDB" id="5976811at2759"/>
<dbReference type="PAN-GO" id="Q9NZV1">
    <property type="GO annotations" value="1 GO annotation based on evolutionary models"/>
</dbReference>
<dbReference type="PhylomeDB" id="Q9NZV1"/>
<dbReference type="TreeFam" id="TF106451"/>
<dbReference type="PathwayCommons" id="Q9NZV1"/>
<dbReference type="SignaLink" id="Q9NZV1"/>
<dbReference type="BioGRID-ORCS" id="51232">
    <property type="hits" value="5 hits in 1142 CRISPR screens"/>
</dbReference>
<dbReference type="ChiTaRS" id="CRIM1">
    <property type="organism name" value="human"/>
</dbReference>
<dbReference type="GeneWiki" id="CRIM1"/>
<dbReference type="GenomeRNAi" id="51232"/>
<dbReference type="Pharos" id="Q9NZV1">
    <property type="development level" value="Tbio"/>
</dbReference>
<dbReference type="PRO" id="PR:Q9NZV1"/>
<dbReference type="Proteomes" id="UP000005640">
    <property type="component" value="Chromosome 2"/>
</dbReference>
<dbReference type="RNAct" id="Q9NZV1">
    <property type="molecule type" value="protein"/>
</dbReference>
<dbReference type="Bgee" id="ENSG00000150938">
    <property type="expression patterns" value="Expressed in saphenous vein and 209 other cell types or tissues"/>
</dbReference>
<dbReference type="ExpressionAtlas" id="Q9NZV1">
    <property type="expression patterns" value="baseline and differential"/>
</dbReference>
<dbReference type="GO" id="GO:0005576">
    <property type="term" value="C:extracellular region"/>
    <property type="evidence" value="ECO:0007669"/>
    <property type="project" value="UniProtKB-SubCell"/>
</dbReference>
<dbReference type="GO" id="GO:0016020">
    <property type="term" value="C:membrane"/>
    <property type="evidence" value="ECO:0000304"/>
    <property type="project" value="ProtInc"/>
</dbReference>
<dbReference type="GO" id="GO:0005886">
    <property type="term" value="C:plasma membrane"/>
    <property type="evidence" value="ECO:0007669"/>
    <property type="project" value="UniProtKB-SubCell"/>
</dbReference>
<dbReference type="GO" id="GO:0005010">
    <property type="term" value="F:insulin-like growth factor receptor activity"/>
    <property type="evidence" value="ECO:0000304"/>
    <property type="project" value="ProtInc"/>
</dbReference>
<dbReference type="GO" id="GO:0030165">
    <property type="term" value="F:PDZ domain binding"/>
    <property type="evidence" value="ECO:0000314"/>
    <property type="project" value="MGI"/>
</dbReference>
<dbReference type="GO" id="GO:0004867">
    <property type="term" value="F:serine-type endopeptidase inhibitor activity"/>
    <property type="evidence" value="ECO:0007669"/>
    <property type="project" value="InterPro"/>
</dbReference>
<dbReference type="GO" id="GO:0030514">
    <property type="term" value="P:negative regulation of BMP signaling pathway"/>
    <property type="evidence" value="ECO:0000315"/>
    <property type="project" value="ARUK-UCL"/>
</dbReference>
<dbReference type="GO" id="GO:0045668">
    <property type="term" value="P:negative regulation of osteoblast differentiation"/>
    <property type="evidence" value="ECO:0000315"/>
    <property type="project" value="ARUK-UCL"/>
</dbReference>
<dbReference type="GO" id="GO:0007399">
    <property type="term" value="P:nervous system development"/>
    <property type="evidence" value="ECO:0000304"/>
    <property type="project" value="ProtInc"/>
</dbReference>
<dbReference type="FunFam" id="2.10.22.10:FF:000002">
    <property type="entry name" value="Cysteine rich transmembrane BMP regulator 1"/>
    <property type="match status" value="1"/>
</dbReference>
<dbReference type="FunFam" id="2.10.22.10:FF:000003">
    <property type="entry name" value="Cysteine rich transmembrane BMP regulator 1"/>
    <property type="match status" value="1"/>
</dbReference>
<dbReference type="FunFam" id="4.10.40.20:FF:000003">
    <property type="entry name" value="cysteine-rich motor neuron 1 protein isoform X1"/>
    <property type="match status" value="1"/>
</dbReference>
<dbReference type="FunFam" id="2.10.22.10:FF:000001">
    <property type="entry name" value="Cysteine-rich motor neuron 1 protein-like protein"/>
    <property type="match status" value="1"/>
</dbReference>
<dbReference type="Gene3D" id="4.10.40.20">
    <property type="match status" value="1"/>
</dbReference>
<dbReference type="Gene3D" id="6.20.200.20">
    <property type="match status" value="6"/>
</dbReference>
<dbReference type="Gene3D" id="2.10.22.10">
    <property type="entry name" value="Antistasin, domain 1"/>
    <property type="match status" value="3"/>
</dbReference>
<dbReference type="InterPro" id="IPR004094">
    <property type="entry name" value="Antistasin-like"/>
</dbReference>
<dbReference type="InterPro" id="IPR052624">
    <property type="entry name" value="CRIM1"/>
</dbReference>
<dbReference type="InterPro" id="IPR045813">
    <property type="entry name" value="CRIM1_C"/>
</dbReference>
<dbReference type="InterPro" id="IPR009030">
    <property type="entry name" value="Growth_fac_rcpt_cys_sf"/>
</dbReference>
<dbReference type="InterPro" id="IPR011061">
    <property type="entry name" value="Hirudin/antistatin"/>
</dbReference>
<dbReference type="InterPro" id="IPR000867">
    <property type="entry name" value="IGFBP-like"/>
</dbReference>
<dbReference type="InterPro" id="IPR001007">
    <property type="entry name" value="VWF_dom"/>
</dbReference>
<dbReference type="PANTHER" id="PTHR46439">
    <property type="entry name" value="CYSTEINE-RICH MOTOR NEURON 1 PROTEIN"/>
    <property type="match status" value="1"/>
</dbReference>
<dbReference type="PANTHER" id="PTHR46439:SF1">
    <property type="entry name" value="CYSTEINE-RICH MOTOR NEURON 1 PROTEIN"/>
    <property type="match status" value="1"/>
</dbReference>
<dbReference type="Pfam" id="PF02822">
    <property type="entry name" value="Antistasin"/>
    <property type="match status" value="4"/>
</dbReference>
<dbReference type="Pfam" id="PF19442">
    <property type="entry name" value="CRIM1_C"/>
    <property type="match status" value="1"/>
</dbReference>
<dbReference type="Pfam" id="PF00219">
    <property type="entry name" value="IGFBP"/>
    <property type="match status" value="1"/>
</dbReference>
<dbReference type="Pfam" id="PF00093">
    <property type="entry name" value="VWC"/>
    <property type="match status" value="6"/>
</dbReference>
<dbReference type="SMART" id="SM00121">
    <property type="entry name" value="IB"/>
    <property type="match status" value="1"/>
</dbReference>
<dbReference type="SMART" id="SM00214">
    <property type="entry name" value="VWC"/>
    <property type="match status" value="6"/>
</dbReference>
<dbReference type="SMART" id="SM00215">
    <property type="entry name" value="VWC_out"/>
    <property type="match status" value="4"/>
</dbReference>
<dbReference type="SUPFAM" id="SSF57603">
    <property type="entry name" value="FnI-like domain"/>
    <property type="match status" value="6"/>
</dbReference>
<dbReference type="SUPFAM" id="SSF57184">
    <property type="entry name" value="Growth factor receptor domain"/>
    <property type="match status" value="1"/>
</dbReference>
<dbReference type="SUPFAM" id="SSF57262">
    <property type="entry name" value="Leech antihemostatic proteins"/>
    <property type="match status" value="3"/>
</dbReference>
<dbReference type="PROSITE" id="PS51252">
    <property type="entry name" value="ANTISTASIN"/>
    <property type="match status" value="4"/>
</dbReference>
<dbReference type="PROSITE" id="PS51323">
    <property type="entry name" value="IGFBP_N_2"/>
    <property type="match status" value="1"/>
</dbReference>
<dbReference type="PROSITE" id="PS01208">
    <property type="entry name" value="VWFC_1"/>
    <property type="match status" value="6"/>
</dbReference>
<dbReference type="PROSITE" id="PS50184">
    <property type="entry name" value="VWFC_2"/>
    <property type="match status" value="6"/>
</dbReference>
<proteinExistence type="evidence at protein level"/>
<evidence type="ECO:0000255" key="1"/>
<evidence type="ECO:0000255" key="2">
    <source>
        <dbReference type="PROSITE-ProRule" id="PRU00220"/>
    </source>
</evidence>
<evidence type="ECO:0000255" key="3">
    <source>
        <dbReference type="PROSITE-ProRule" id="PRU00582"/>
    </source>
</evidence>
<evidence type="ECO:0000255" key="4">
    <source>
        <dbReference type="PROSITE-ProRule" id="PRU00653"/>
    </source>
</evidence>
<evidence type="ECO:0000269" key="5">
    <source>
    </source>
</evidence>
<evidence type="ECO:0000269" key="6">
    <source>
    </source>
</evidence>
<evidence type="ECO:0000269" key="7">
    <source>
    </source>
</evidence>
<evidence type="ECO:0000269" key="8">
    <source>
    </source>
</evidence>
<evidence type="ECO:0000305" key="9"/>
<evidence type="ECO:0007744" key="10">
    <source>
    </source>
</evidence>
<evidence type="ECO:0007744" key="11">
    <source>
    </source>
</evidence>
<feature type="signal peptide" evidence="7 8">
    <location>
        <begin position="1"/>
        <end position="34"/>
    </location>
</feature>
<feature type="chain" id="PRO_0000021001" description="Cysteine-rich motor neuron 1 protein">
    <location>
        <begin position="35"/>
        <end position="1036"/>
    </location>
</feature>
<feature type="chain" id="PRO_0000296243" description="Processed cysteine-rich motor neuron 1 protein">
    <location>
        <begin status="unknown"/>
        <end position="1036"/>
    </location>
</feature>
<feature type="topological domain" description="Extracellular" evidence="1">
    <location>
        <begin position="35"/>
        <end position="939"/>
    </location>
</feature>
<feature type="transmembrane region" description="Helical" evidence="1">
    <location>
        <begin position="940"/>
        <end position="960"/>
    </location>
</feature>
<feature type="topological domain" description="Cytoplasmic" evidence="1">
    <location>
        <begin position="961"/>
        <end position="1036"/>
    </location>
</feature>
<feature type="domain" description="IGFBP N-terminal" evidence="4">
    <location>
        <begin position="35"/>
        <end position="112"/>
    </location>
</feature>
<feature type="domain" description="VWFC 1" evidence="2">
    <location>
        <begin position="334"/>
        <end position="391"/>
    </location>
</feature>
<feature type="domain" description="VWFC 2" evidence="2">
    <location>
        <begin position="401"/>
        <end position="457"/>
    </location>
</feature>
<feature type="domain" description="Antistasin-like 1" evidence="3">
    <location>
        <begin position="469"/>
        <end position="498"/>
    </location>
</feature>
<feature type="domain" description="Antistasin-like 2" evidence="3">
    <location>
        <begin position="505"/>
        <end position="532"/>
    </location>
</feature>
<feature type="domain" description="Antistasin-like 3" evidence="3">
    <location>
        <begin position="539"/>
        <end position="564"/>
    </location>
</feature>
<feature type="domain" description="Antistasin-like 4" evidence="3">
    <location>
        <begin position="567"/>
        <end position="592"/>
    </location>
</feature>
<feature type="domain" description="VWFC 3" evidence="2">
    <location>
        <begin position="606"/>
        <end position="663"/>
    </location>
</feature>
<feature type="domain" description="VWFC 4" evidence="2">
    <location>
        <begin position="677"/>
        <end position="735"/>
    </location>
</feature>
<feature type="domain" description="VWFC 5" evidence="2">
    <location>
        <begin position="751"/>
        <end position="809"/>
    </location>
</feature>
<feature type="domain" description="VWFC 6" evidence="2">
    <location>
        <begin position="817"/>
        <end position="874"/>
    </location>
</feature>
<feature type="short sequence motif" description="Cell attachment site" evidence="1">
    <location>
        <begin position="314"/>
        <end position="316"/>
    </location>
</feature>
<feature type="modified residue" description="Phosphothreonine" evidence="10 11">
    <location>
        <position position="1035"/>
    </location>
</feature>
<feature type="glycosylation site" description="N-linked (GlcNAc...) asparagine" evidence="1">
    <location>
        <position position="71"/>
    </location>
</feature>
<feature type="glycosylation site" description="N-linked (GlcNAc...) asparagine" evidence="1">
    <location>
        <position position="113"/>
    </location>
</feature>
<feature type="glycosylation site" description="N-linked (GlcNAc...) asparagine" evidence="1">
    <location>
        <position position="330"/>
    </location>
</feature>
<feature type="glycosylation site" description="N-linked (GlcNAc...) asparagine" evidence="1">
    <location>
        <position position="474"/>
    </location>
</feature>
<feature type="glycosylation site" description="N-linked (GlcNAc...) asparagine" evidence="1">
    <location>
        <position position="746"/>
    </location>
</feature>
<feature type="disulfide bond" evidence="4">
    <location>
        <begin position="37"/>
        <end position="60"/>
    </location>
</feature>
<feature type="disulfide bond" evidence="4">
    <location>
        <begin position="40"/>
        <end position="62"/>
    </location>
</feature>
<feature type="disulfide bond" evidence="4">
    <location>
        <begin position="45"/>
        <end position="63"/>
    </location>
</feature>
<feature type="disulfide bond" evidence="4">
    <location>
        <begin position="51"/>
        <end position="66"/>
    </location>
</feature>
<feature type="disulfide bond" evidence="4">
    <location>
        <begin position="74"/>
        <end position="90"/>
    </location>
</feature>
<feature type="disulfide bond" evidence="4">
    <location>
        <begin position="84"/>
        <end position="109"/>
    </location>
</feature>
<feature type="sequence variant" id="VAR_050907" description="In dbSNP:rs12997487.">
    <original>E</original>
    <variation>K</variation>
    <location>
        <position position="502"/>
    </location>
</feature>
<feature type="sequence variant" id="VAR_061625" description="In dbSNP:rs59929305.">
    <original>V</original>
    <variation>I</variation>
    <location>
        <position position="781"/>
    </location>
</feature>
<feature type="sequence conflict" description="In Ref. 2; BAD92376." evidence="9" ref="2">
    <original>C</original>
    <variation>F</variation>
    <location>
        <position position="433"/>
    </location>
</feature>
<reference key="1">
    <citation type="journal article" date="2000" name="Mech. Dev.">
        <title>CRIM1, a novel gene encoding a cysteine-rich repeat protein, is developmentally regulated and implicated in vertebrate CNS development and organogenesis.</title>
        <authorList>
            <person name="Kolle G.V."/>
            <person name="Georgas K."/>
            <person name="Holmes G.P."/>
            <person name="Little M.H."/>
            <person name="Yamada T."/>
        </authorList>
    </citation>
    <scope>NUCLEOTIDE SEQUENCE [GENOMIC DNA / MRNA]</scope>
    <scope>TISSUE SPECIFICITY</scope>
</reference>
<reference key="2">
    <citation type="submission" date="2005-03" db="EMBL/GenBank/DDBJ databases">
        <authorList>
            <person name="Totoki Y."/>
            <person name="Toyoda A."/>
            <person name="Takeda T."/>
            <person name="Sakaki Y."/>
            <person name="Tanaka A."/>
            <person name="Yokoyama S."/>
            <person name="Ohara O."/>
            <person name="Nagase T."/>
            <person name="Kikuno R.F."/>
        </authorList>
    </citation>
    <scope>NUCLEOTIDE SEQUENCE [LARGE SCALE MRNA]</scope>
    <source>
        <tissue>Brain</tissue>
    </source>
</reference>
<reference key="3">
    <citation type="journal article" date="2003" name="Genome Res.">
        <title>The secreted protein discovery initiative (SPDI), a large-scale effort to identify novel human secreted and transmembrane proteins: a bioinformatics assessment.</title>
        <authorList>
            <person name="Clark H.F."/>
            <person name="Gurney A.L."/>
            <person name="Abaya E."/>
            <person name="Baker K."/>
            <person name="Baldwin D.T."/>
            <person name="Brush J."/>
            <person name="Chen J."/>
            <person name="Chow B."/>
            <person name="Chui C."/>
            <person name="Crowley C."/>
            <person name="Currell B."/>
            <person name="Deuel B."/>
            <person name="Dowd P."/>
            <person name="Eaton D."/>
            <person name="Foster J.S."/>
            <person name="Grimaldi C."/>
            <person name="Gu Q."/>
            <person name="Hass P.E."/>
            <person name="Heldens S."/>
            <person name="Huang A."/>
            <person name="Kim H.S."/>
            <person name="Klimowski L."/>
            <person name="Jin Y."/>
            <person name="Johnson S."/>
            <person name="Lee J."/>
            <person name="Lewis L."/>
            <person name="Liao D."/>
            <person name="Mark M.R."/>
            <person name="Robbie E."/>
            <person name="Sanchez C."/>
            <person name="Schoenfeld J."/>
            <person name="Seshagiri S."/>
            <person name="Simmons L."/>
            <person name="Singh J."/>
            <person name="Smith V."/>
            <person name="Stinson J."/>
            <person name="Vagts A."/>
            <person name="Vandlen R.L."/>
            <person name="Watanabe C."/>
            <person name="Wieand D."/>
            <person name="Woods K."/>
            <person name="Xie M.-H."/>
            <person name="Yansura D.G."/>
            <person name="Yi S."/>
            <person name="Yu G."/>
            <person name="Yuan J."/>
            <person name="Zhang M."/>
            <person name="Zhang Z."/>
            <person name="Goddard A.D."/>
            <person name="Wood W.I."/>
            <person name="Godowski P.J."/>
            <person name="Gray A.M."/>
        </authorList>
    </citation>
    <scope>NUCLEOTIDE SEQUENCE [LARGE SCALE MRNA]</scope>
</reference>
<reference key="4">
    <citation type="journal article" date="2004" name="Genome Res.">
        <title>The status, quality, and expansion of the NIH full-length cDNA project: the Mammalian Gene Collection (MGC).</title>
        <authorList>
            <consortium name="The MGC Project Team"/>
        </authorList>
    </citation>
    <scope>NUCLEOTIDE SEQUENCE [LARGE SCALE MRNA]</scope>
    <source>
        <tissue>Brain</tissue>
    </source>
</reference>
<reference key="5">
    <citation type="journal article" date="2003" name="J. Biol. Chem.">
        <title>CRIM1 regulates the rate of processing and delivery of bone morphogenetic proteins to the cell surface.</title>
        <authorList>
            <person name="Wilkinson L."/>
            <person name="Kolle G.V."/>
            <person name="Wen D."/>
            <person name="Piper M."/>
            <person name="Scott J."/>
            <person name="Little M.H."/>
        </authorList>
    </citation>
    <scope>PROTEIN SEQUENCE OF 35-44</scope>
    <scope>FUNCTION</scope>
    <scope>GLYCOSYLATION</scope>
    <scope>SUBCELLULAR LOCATION</scope>
    <scope>INTERACTION WITH BMP4 AND BMP7</scope>
    <scope>IDENTIFICATION OF A SOLUBLE FORM</scope>
</reference>
<reference key="6">
    <citation type="journal article" date="2004" name="Protein Sci.">
        <title>Signal peptide prediction based on analysis of experimentally verified cleavage sites.</title>
        <authorList>
            <person name="Zhang Z."/>
            <person name="Henzel W.J."/>
        </authorList>
    </citation>
    <scope>PROTEIN SEQUENCE OF 35-49</scope>
</reference>
<reference key="7">
    <citation type="journal article" date="2002" name="Mech. Dev.">
        <title>CRIM1 is involved in endothelial cell capillary formation in vitro and is expressed in blood vessels in vivo.</title>
        <authorList>
            <person name="Glienke J."/>
            <person name="Sturz A."/>
            <person name="Menrad A."/>
            <person name="Thierauch K.-H."/>
        </authorList>
    </citation>
    <scope>FUNCTION</scope>
    <scope>GLYCOSYLATION</scope>
    <scope>TISSUE SPECIFICITY</scope>
</reference>
<reference key="8">
    <citation type="journal article" date="2008" name="Proc. Natl. Acad. Sci. U.S.A.">
        <title>A quantitative atlas of mitotic phosphorylation.</title>
        <authorList>
            <person name="Dephoure N."/>
            <person name="Zhou C."/>
            <person name="Villen J."/>
            <person name="Beausoleil S.A."/>
            <person name="Bakalarski C.E."/>
            <person name="Elledge S.J."/>
            <person name="Gygi S.P."/>
        </authorList>
    </citation>
    <scope>PHOSPHORYLATION [LARGE SCALE ANALYSIS] AT THR-1035</scope>
    <scope>IDENTIFICATION BY MASS SPECTROMETRY [LARGE SCALE ANALYSIS]</scope>
    <source>
        <tissue>Cervix carcinoma</tissue>
    </source>
</reference>
<reference key="9">
    <citation type="journal article" date="2013" name="J. Proteome Res.">
        <title>Toward a comprehensive characterization of a human cancer cell phosphoproteome.</title>
        <authorList>
            <person name="Zhou H."/>
            <person name="Di Palma S."/>
            <person name="Preisinger C."/>
            <person name="Peng M."/>
            <person name="Polat A.N."/>
            <person name="Heck A.J."/>
            <person name="Mohammed S."/>
        </authorList>
    </citation>
    <scope>PHOSPHORYLATION [LARGE SCALE ANALYSIS] AT THR-1035</scope>
    <scope>IDENTIFICATION BY MASS SPECTROMETRY [LARGE SCALE ANALYSIS]</scope>
    <source>
        <tissue>Cervix carcinoma</tissue>
    </source>
</reference>
<accession>Q9NZV1</accession>
<accession>Q2M2G4</accession>
<accession>Q59GH0</accession>
<accession>Q7LCQ5</accession>
<accession>Q9H318</accession>
<keyword id="KW-1003">Cell membrane</keyword>
<keyword id="KW-0903">Direct protein sequencing</keyword>
<keyword id="KW-1015">Disulfide bond</keyword>
<keyword id="KW-0325">Glycoprotein</keyword>
<keyword id="KW-0472">Membrane</keyword>
<keyword id="KW-0597">Phosphoprotein</keyword>
<keyword id="KW-1267">Proteomics identification</keyword>
<keyword id="KW-1185">Reference proteome</keyword>
<keyword id="KW-0677">Repeat</keyword>
<keyword id="KW-0964">Secreted</keyword>
<keyword id="KW-0732">Signal</keyword>
<keyword id="KW-0812">Transmembrane</keyword>
<keyword id="KW-1133">Transmembrane helix</keyword>
<name>CRIM1_HUMAN</name>